<feature type="chain" id="PRO_0000341699" description="2-succinyl-5-enolpyruvyl-6-hydroxy-3-cyclohexene-1-carboxylate synthase">
    <location>
        <begin position="1"/>
        <end position="583"/>
    </location>
</feature>
<reference key="1">
    <citation type="journal article" date="2001" name="DNA Res.">
        <title>Complete genomic sequence of the filamentous nitrogen-fixing cyanobacterium Anabaena sp. strain PCC 7120.</title>
        <authorList>
            <person name="Kaneko T."/>
            <person name="Nakamura Y."/>
            <person name="Wolk C.P."/>
            <person name="Kuritz T."/>
            <person name="Sasamoto S."/>
            <person name="Watanabe A."/>
            <person name="Iriguchi M."/>
            <person name="Ishikawa A."/>
            <person name="Kawashima K."/>
            <person name="Kimura T."/>
            <person name="Kishida Y."/>
            <person name="Kohara M."/>
            <person name="Matsumoto M."/>
            <person name="Matsuno A."/>
            <person name="Muraki A."/>
            <person name="Nakazaki N."/>
            <person name="Shimpo S."/>
            <person name="Sugimoto M."/>
            <person name="Takazawa M."/>
            <person name="Yamada M."/>
            <person name="Yasuda M."/>
            <person name="Tabata S."/>
        </authorList>
    </citation>
    <scope>NUCLEOTIDE SEQUENCE [LARGE SCALE GENOMIC DNA]</scope>
    <source>
        <strain>PCC 7120 / SAG 25.82 / UTEX 2576</strain>
    </source>
</reference>
<accession>Q8YZZ2</accession>
<gene>
    <name evidence="1" type="primary">menD</name>
    <name type="ordered locus">alr0312</name>
</gene>
<dbReference type="EC" id="2.2.1.9" evidence="1"/>
<dbReference type="EMBL" id="BA000019">
    <property type="protein sequence ID" value="BAB72270.1"/>
    <property type="status" value="ALT_INIT"/>
    <property type="molecule type" value="Genomic_DNA"/>
</dbReference>
<dbReference type="PIR" id="AH1845">
    <property type="entry name" value="AH1845"/>
</dbReference>
<dbReference type="RefSeq" id="WP_010994488.1">
    <property type="nucleotide sequence ID" value="NZ_RSCN01000076.1"/>
</dbReference>
<dbReference type="SMR" id="Q8YZZ2"/>
<dbReference type="STRING" id="103690.gene:10492320"/>
<dbReference type="KEGG" id="ana:alr0312"/>
<dbReference type="eggNOG" id="COG1165">
    <property type="taxonomic scope" value="Bacteria"/>
</dbReference>
<dbReference type="OrthoDB" id="9791859at2"/>
<dbReference type="UniPathway" id="UPA00995"/>
<dbReference type="UniPathway" id="UPA01057">
    <property type="reaction ID" value="UER00164"/>
</dbReference>
<dbReference type="Proteomes" id="UP000002483">
    <property type="component" value="Chromosome"/>
</dbReference>
<dbReference type="GO" id="GO:0070204">
    <property type="term" value="F:2-succinyl-5-enolpyruvyl-6-hydroxy-3-cyclohexene-1-carboxylic-acid synthase activity"/>
    <property type="evidence" value="ECO:0007669"/>
    <property type="project" value="UniProtKB-UniRule"/>
</dbReference>
<dbReference type="GO" id="GO:0000287">
    <property type="term" value="F:magnesium ion binding"/>
    <property type="evidence" value="ECO:0007669"/>
    <property type="project" value="UniProtKB-UniRule"/>
</dbReference>
<dbReference type="GO" id="GO:0030145">
    <property type="term" value="F:manganese ion binding"/>
    <property type="evidence" value="ECO:0007669"/>
    <property type="project" value="UniProtKB-UniRule"/>
</dbReference>
<dbReference type="GO" id="GO:0030976">
    <property type="term" value="F:thiamine pyrophosphate binding"/>
    <property type="evidence" value="ECO:0007669"/>
    <property type="project" value="UniProtKB-UniRule"/>
</dbReference>
<dbReference type="GO" id="GO:0009234">
    <property type="term" value="P:menaquinone biosynthetic process"/>
    <property type="evidence" value="ECO:0007669"/>
    <property type="project" value="InterPro"/>
</dbReference>
<dbReference type="GO" id="GO:0042372">
    <property type="term" value="P:phylloquinone biosynthetic process"/>
    <property type="evidence" value="ECO:0007669"/>
    <property type="project" value="UniProtKB-UniRule"/>
</dbReference>
<dbReference type="CDD" id="cd07037">
    <property type="entry name" value="TPP_PYR_MenD"/>
    <property type="match status" value="1"/>
</dbReference>
<dbReference type="CDD" id="cd02009">
    <property type="entry name" value="TPP_SHCHC_synthase"/>
    <property type="match status" value="1"/>
</dbReference>
<dbReference type="Gene3D" id="3.40.50.970">
    <property type="match status" value="2"/>
</dbReference>
<dbReference type="Gene3D" id="3.40.50.1220">
    <property type="entry name" value="TPP-binding domain"/>
    <property type="match status" value="1"/>
</dbReference>
<dbReference type="HAMAP" id="MF_01659">
    <property type="entry name" value="MenD"/>
    <property type="match status" value="1"/>
</dbReference>
<dbReference type="InterPro" id="IPR004433">
    <property type="entry name" value="MenaQ_synth_MenD"/>
</dbReference>
<dbReference type="InterPro" id="IPR032264">
    <property type="entry name" value="MenD_middle"/>
</dbReference>
<dbReference type="InterPro" id="IPR029061">
    <property type="entry name" value="THDP-binding"/>
</dbReference>
<dbReference type="InterPro" id="IPR012001">
    <property type="entry name" value="Thiamin_PyroP_enz_TPP-bd_dom"/>
</dbReference>
<dbReference type="NCBIfam" id="TIGR00173">
    <property type="entry name" value="menD"/>
    <property type="match status" value="1"/>
</dbReference>
<dbReference type="PANTHER" id="PTHR42916">
    <property type="entry name" value="2-SUCCINYL-5-ENOLPYRUVYL-6-HYDROXY-3-CYCLOHEXENE-1-CARBOXYLATE SYNTHASE"/>
    <property type="match status" value="1"/>
</dbReference>
<dbReference type="PANTHER" id="PTHR42916:SF1">
    <property type="entry name" value="PROTEIN PHYLLO, CHLOROPLASTIC"/>
    <property type="match status" value="1"/>
</dbReference>
<dbReference type="Pfam" id="PF16582">
    <property type="entry name" value="TPP_enzyme_M_2"/>
    <property type="match status" value="1"/>
</dbReference>
<dbReference type="Pfam" id="PF02776">
    <property type="entry name" value="TPP_enzyme_N"/>
    <property type="match status" value="1"/>
</dbReference>
<dbReference type="PIRSF" id="PIRSF004983">
    <property type="entry name" value="MenD"/>
    <property type="match status" value="1"/>
</dbReference>
<dbReference type="SUPFAM" id="SSF52518">
    <property type="entry name" value="Thiamin diphosphate-binding fold (THDP-binding)"/>
    <property type="match status" value="2"/>
</dbReference>
<organism>
    <name type="scientific">Nostoc sp. (strain PCC 7120 / SAG 25.82 / UTEX 2576)</name>
    <dbReference type="NCBI Taxonomy" id="103690"/>
    <lineage>
        <taxon>Bacteria</taxon>
        <taxon>Bacillati</taxon>
        <taxon>Cyanobacteriota</taxon>
        <taxon>Cyanophyceae</taxon>
        <taxon>Nostocales</taxon>
        <taxon>Nostocaceae</taxon>
        <taxon>Nostoc</taxon>
    </lineage>
</organism>
<sequence>MPIAYKNINQLWAYIFTETLKRLGLAYAVICPGSRSTPLAVAFAQQAPNIEAISILDERSAAFFALGIAKATNRPVAIVCTSGTAGANFYPAVIEAQESRVPLLLLTADRPPELRDCHSGQTIDQMKLYGSYPNWQAELALPVSDMGMLAYLRQTLVHSWYRMQAPTPGPVHLNIPFRDPLAPIPDGTDLSYLLAKFHPEEFFAGITDTTPLPHHSPLSIPPEWLQSQRGIIIAGVAQPQQPQEYCRAIARLSQTLQWPVLAEGLSPVRNYADFNPYLISTYDLILRNQQLATRLAPDMVIQIGDMPTSKELRNWIDTHQPRRWVIDPSDQNLDPLHGRTTHLRIRVEELGYQGVEEDKSSVSEYLQLWCNAETKVRVNVDETLDKMEDLVECKAAWLLSQMLPPETPLFIANSMPVRDVEFFWKPNNLRVRSHFNRGANGIDGTLSTALGISHRQQSSVLITGDLALLHDTNGFLIRNKFVGHLTIILINNNGGGIFEMLPIAKFEPPFEEFFGTPQDIDFAQLCTTYNVQHELIHSWVHLQQRLNPLPNTGIRVLELRTNRKIDAQWRRDNLSNFAADNII</sequence>
<proteinExistence type="inferred from homology"/>
<evidence type="ECO:0000255" key="1">
    <source>
        <dbReference type="HAMAP-Rule" id="MF_01659"/>
    </source>
</evidence>
<evidence type="ECO:0000305" key="2"/>
<comment type="function">
    <text evidence="1">Catalyzes the thiamine diphosphate-dependent decarboxylation of 2-oxoglutarate and the subsequent addition of the resulting succinic semialdehyde-thiamine pyrophosphate anion to isochorismate to yield 2-succinyl-5-enolpyruvyl-6-hydroxy-3-cyclohexene-1-carboxylate (SEPHCHC).</text>
</comment>
<comment type="catalytic activity">
    <reaction evidence="1">
        <text>isochorismate + 2-oxoglutarate + H(+) = 5-enolpyruvoyl-6-hydroxy-2-succinyl-cyclohex-3-ene-1-carboxylate + CO2</text>
        <dbReference type="Rhea" id="RHEA:25593"/>
        <dbReference type="ChEBI" id="CHEBI:15378"/>
        <dbReference type="ChEBI" id="CHEBI:16526"/>
        <dbReference type="ChEBI" id="CHEBI:16810"/>
        <dbReference type="ChEBI" id="CHEBI:29780"/>
        <dbReference type="ChEBI" id="CHEBI:58818"/>
        <dbReference type="EC" id="2.2.1.9"/>
    </reaction>
</comment>
<comment type="cofactor">
    <cofactor evidence="1">
        <name>Mg(2+)</name>
        <dbReference type="ChEBI" id="CHEBI:18420"/>
    </cofactor>
    <cofactor evidence="1">
        <name>Mn(2+)</name>
        <dbReference type="ChEBI" id="CHEBI:29035"/>
    </cofactor>
</comment>
<comment type="cofactor">
    <cofactor evidence="1">
        <name>thiamine diphosphate</name>
        <dbReference type="ChEBI" id="CHEBI:58937"/>
    </cofactor>
    <text evidence="1">Binds 1 thiamine pyrophosphate per subunit.</text>
</comment>
<comment type="pathway">
    <text evidence="1">Quinol/quinone metabolism; 1,4-dihydroxy-2-naphthoate biosynthesis; 1,4-dihydroxy-2-naphthoate from chorismate: step 2/7.</text>
</comment>
<comment type="pathway">
    <text evidence="1">Cofactor biosynthesis; phylloquinone biosynthesis.</text>
</comment>
<comment type="subunit">
    <text evidence="1">Homodimer.</text>
</comment>
<comment type="similarity">
    <text evidence="1">Belongs to the TPP enzyme family. MenD subfamily.</text>
</comment>
<comment type="sequence caution" evidence="2">
    <conflict type="erroneous initiation">
        <sequence resource="EMBL-CDS" id="BAB72270"/>
    </conflict>
</comment>
<name>MEND_NOSS1</name>
<protein>
    <recommendedName>
        <fullName evidence="1">2-succinyl-5-enolpyruvyl-6-hydroxy-3-cyclohexene-1-carboxylate synthase</fullName>
        <shortName evidence="1">SEPHCHC synthase</shortName>
        <ecNumber evidence="1">2.2.1.9</ecNumber>
    </recommendedName>
</protein>
<keyword id="KW-0460">Magnesium</keyword>
<keyword id="KW-0464">Manganese</keyword>
<keyword id="KW-0479">Metal-binding</keyword>
<keyword id="KW-1185">Reference proteome</keyword>
<keyword id="KW-0786">Thiamine pyrophosphate</keyword>
<keyword id="KW-0808">Transferase</keyword>